<feature type="chain" id="PRO_0000266354" description="Guanylate kinase">
    <location>
        <begin position="1"/>
        <end position="198"/>
    </location>
</feature>
<feature type="domain" description="Guanylate kinase-like" evidence="1">
    <location>
        <begin position="6"/>
        <end position="192"/>
    </location>
</feature>
<feature type="binding site" evidence="1">
    <location>
        <begin position="13"/>
        <end position="20"/>
    </location>
    <ligand>
        <name>ATP</name>
        <dbReference type="ChEBI" id="CHEBI:30616"/>
    </ligand>
</feature>
<proteinExistence type="inferred from homology"/>
<name>KGUA_MYCS5</name>
<comment type="function">
    <text evidence="1">Essential for recycling GMP and indirectly, cGMP.</text>
</comment>
<comment type="catalytic activity">
    <reaction evidence="1">
        <text>GMP + ATP = GDP + ADP</text>
        <dbReference type="Rhea" id="RHEA:20780"/>
        <dbReference type="ChEBI" id="CHEBI:30616"/>
        <dbReference type="ChEBI" id="CHEBI:58115"/>
        <dbReference type="ChEBI" id="CHEBI:58189"/>
        <dbReference type="ChEBI" id="CHEBI:456216"/>
        <dbReference type="EC" id="2.7.4.8"/>
    </reaction>
</comment>
<comment type="subcellular location">
    <subcellularLocation>
        <location evidence="1">Cytoplasm</location>
    </subcellularLocation>
</comment>
<comment type="similarity">
    <text evidence="1">Belongs to the guanylate kinase family.</text>
</comment>
<sequence length="198" mass="22868">MNKKKKSIVIFTGPSGVGKGTVEQLVFNYDELNLSLSCSATTRSPRGGETNGIHYYFISKEEFKDRIKNKKFLEHSFHFDNYYGTLYSELDNIIARNKVPFLEIETNGAKIIAQKMQKLKNPPYNLITIFLSPPSITDIYKRIKNRGTENAQTIKNRVNKAKEELLEAGNFKYVVYNDRPERAAQEIREILHKELDID</sequence>
<reference key="1">
    <citation type="journal article" date="2005" name="J. Bacteriol.">
        <title>Swine and poultry pathogens: the complete genome sequences of two strains of Mycoplasma hyopneumoniae and a strain of Mycoplasma synoviae.</title>
        <authorList>
            <person name="Vasconcelos A.T.R."/>
            <person name="Ferreira H.B."/>
            <person name="Bizarro C.V."/>
            <person name="Bonatto S.L."/>
            <person name="Carvalho M.O."/>
            <person name="Pinto P.M."/>
            <person name="Almeida D.F."/>
            <person name="Almeida L.G.P."/>
            <person name="Almeida R."/>
            <person name="Alves-Junior L."/>
            <person name="Assuncao E.N."/>
            <person name="Azevedo V.A.C."/>
            <person name="Bogo M.R."/>
            <person name="Brigido M.M."/>
            <person name="Brocchi M."/>
            <person name="Burity H.A."/>
            <person name="Camargo A.A."/>
            <person name="Camargo S.S."/>
            <person name="Carepo M.S."/>
            <person name="Carraro D.M."/>
            <person name="de Mattos Cascardo J.C."/>
            <person name="Castro L.A."/>
            <person name="Cavalcanti G."/>
            <person name="Chemale G."/>
            <person name="Collevatti R.G."/>
            <person name="Cunha C.W."/>
            <person name="Dallagiovanna B."/>
            <person name="Dambros B.P."/>
            <person name="Dellagostin O.A."/>
            <person name="Falcao C."/>
            <person name="Fantinatti-Garboggini F."/>
            <person name="Felipe M.S.S."/>
            <person name="Fiorentin L."/>
            <person name="Franco G.R."/>
            <person name="Freitas N.S.A."/>
            <person name="Frias D."/>
            <person name="Grangeiro T.B."/>
            <person name="Grisard E.C."/>
            <person name="Guimaraes C.T."/>
            <person name="Hungria M."/>
            <person name="Jardim S.N."/>
            <person name="Krieger M.A."/>
            <person name="Laurino J.P."/>
            <person name="Lima L.F.A."/>
            <person name="Lopes M.I."/>
            <person name="Loreto E.L.S."/>
            <person name="Madeira H.M.F."/>
            <person name="Manfio G.P."/>
            <person name="Maranhao A.Q."/>
            <person name="Martinkovics C.T."/>
            <person name="Medeiros S.R.B."/>
            <person name="Moreira M.A.M."/>
            <person name="Neiva M."/>
            <person name="Ramalho-Neto C.E."/>
            <person name="Nicolas M.F."/>
            <person name="Oliveira S.C."/>
            <person name="Paixao R.F.C."/>
            <person name="Pedrosa F.O."/>
            <person name="Pena S.D.J."/>
            <person name="Pereira M."/>
            <person name="Pereira-Ferrari L."/>
            <person name="Piffer I."/>
            <person name="Pinto L.S."/>
            <person name="Potrich D.P."/>
            <person name="Salim A.C.M."/>
            <person name="Santos F.R."/>
            <person name="Schmitt R."/>
            <person name="Schneider M.P.C."/>
            <person name="Schrank A."/>
            <person name="Schrank I.S."/>
            <person name="Schuck A.F."/>
            <person name="Seuanez H.N."/>
            <person name="Silva D.W."/>
            <person name="Silva R."/>
            <person name="Silva S.C."/>
            <person name="Soares C.M.A."/>
            <person name="Souza K.R.L."/>
            <person name="Souza R.C."/>
            <person name="Staats C.C."/>
            <person name="Steffens M.B.R."/>
            <person name="Teixeira S.M.R."/>
            <person name="Urmenyi T.P."/>
            <person name="Vainstein M.H."/>
            <person name="Zuccherato L.W."/>
            <person name="Simpson A.J.G."/>
            <person name="Zaha A."/>
        </authorList>
    </citation>
    <scope>NUCLEOTIDE SEQUENCE [LARGE SCALE GENOMIC DNA]</scope>
    <source>
        <strain>53</strain>
    </source>
</reference>
<organism>
    <name type="scientific">Mycoplasmopsis synoviae (strain 53)</name>
    <name type="common">Mycoplasma synoviae</name>
    <dbReference type="NCBI Taxonomy" id="262723"/>
    <lineage>
        <taxon>Bacteria</taxon>
        <taxon>Bacillati</taxon>
        <taxon>Mycoplasmatota</taxon>
        <taxon>Mycoplasmoidales</taxon>
        <taxon>Metamycoplasmataceae</taxon>
        <taxon>Mycoplasmopsis</taxon>
    </lineage>
</organism>
<gene>
    <name evidence="1" type="primary">gmk</name>
    <name type="ordered locus">MS53_0123</name>
</gene>
<accession>Q4A6S7</accession>
<keyword id="KW-0067">ATP-binding</keyword>
<keyword id="KW-0963">Cytoplasm</keyword>
<keyword id="KW-0418">Kinase</keyword>
<keyword id="KW-0547">Nucleotide-binding</keyword>
<keyword id="KW-1185">Reference proteome</keyword>
<keyword id="KW-0808">Transferase</keyword>
<dbReference type="EC" id="2.7.4.8" evidence="1"/>
<dbReference type="EMBL" id="AE017245">
    <property type="protein sequence ID" value="AAZ43544.1"/>
    <property type="molecule type" value="Genomic_DNA"/>
</dbReference>
<dbReference type="RefSeq" id="WP_011283287.1">
    <property type="nucleotide sequence ID" value="NC_007294.1"/>
</dbReference>
<dbReference type="SMR" id="Q4A6S7"/>
<dbReference type="STRING" id="262723.MS53_0123"/>
<dbReference type="KEGG" id="msy:MS53_0123"/>
<dbReference type="eggNOG" id="COG0194">
    <property type="taxonomic scope" value="Bacteria"/>
</dbReference>
<dbReference type="HOGENOM" id="CLU_001715_1_2_14"/>
<dbReference type="OrthoDB" id="9808150at2"/>
<dbReference type="Proteomes" id="UP000000549">
    <property type="component" value="Chromosome"/>
</dbReference>
<dbReference type="GO" id="GO:0005829">
    <property type="term" value="C:cytosol"/>
    <property type="evidence" value="ECO:0007669"/>
    <property type="project" value="TreeGrafter"/>
</dbReference>
<dbReference type="GO" id="GO:0005524">
    <property type="term" value="F:ATP binding"/>
    <property type="evidence" value="ECO:0007669"/>
    <property type="project" value="UniProtKB-UniRule"/>
</dbReference>
<dbReference type="GO" id="GO:0004385">
    <property type="term" value="F:guanylate kinase activity"/>
    <property type="evidence" value="ECO:0007669"/>
    <property type="project" value="UniProtKB-UniRule"/>
</dbReference>
<dbReference type="CDD" id="cd00071">
    <property type="entry name" value="GMPK"/>
    <property type="match status" value="1"/>
</dbReference>
<dbReference type="FunFam" id="3.30.63.10:FF:000005">
    <property type="entry name" value="Guanylate kinase"/>
    <property type="match status" value="1"/>
</dbReference>
<dbReference type="Gene3D" id="3.30.63.10">
    <property type="entry name" value="Guanylate Kinase phosphate binding domain"/>
    <property type="match status" value="1"/>
</dbReference>
<dbReference type="Gene3D" id="3.40.50.300">
    <property type="entry name" value="P-loop containing nucleotide triphosphate hydrolases"/>
    <property type="match status" value="1"/>
</dbReference>
<dbReference type="HAMAP" id="MF_00328">
    <property type="entry name" value="Guanylate_kinase"/>
    <property type="match status" value="1"/>
</dbReference>
<dbReference type="InterPro" id="IPR008145">
    <property type="entry name" value="GK/Ca_channel_bsu"/>
</dbReference>
<dbReference type="InterPro" id="IPR008144">
    <property type="entry name" value="Guanylate_kin-like_dom"/>
</dbReference>
<dbReference type="InterPro" id="IPR017665">
    <property type="entry name" value="Guanylate_kinase"/>
</dbReference>
<dbReference type="InterPro" id="IPR020590">
    <property type="entry name" value="Guanylate_kinase_CS"/>
</dbReference>
<dbReference type="InterPro" id="IPR027417">
    <property type="entry name" value="P-loop_NTPase"/>
</dbReference>
<dbReference type="NCBIfam" id="TIGR03263">
    <property type="entry name" value="guanyl_kin"/>
    <property type="match status" value="1"/>
</dbReference>
<dbReference type="PANTHER" id="PTHR23117:SF13">
    <property type="entry name" value="GUANYLATE KINASE"/>
    <property type="match status" value="1"/>
</dbReference>
<dbReference type="PANTHER" id="PTHR23117">
    <property type="entry name" value="GUANYLATE KINASE-RELATED"/>
    <property type="match status" value="1"/>
</dbReference>
<dbReference type="Pfam" id="PF00625">
    <property type="entry name" value="Guanylate_kin"/>
    <property type="match status" value="1"/>
</dbReference>
<dbReference type="SMART" id="SM00072">
    <property type="entry name" value="GuKc"/>
    <property type="match status" value="1"/>
</dbReference>
<dbReference type="SUPFAM" id="SSF52540">
    <property type="entry name" value="P-loop containing nucleoside triphosphate hydrolases"/>
    <property type="match status" value="1"/>
</dbReference>
<dbReference type="PROSITE" id="PS00856">
    <property type="entry name" value="GUANYLATE_KINASE_1"/>
    <property type="match status" value="1"/>
</dbReference>
<dbReference type="PROSITE" id="PS50052">
    <property type="entry name" value="GUANYLATE_KINASE_2"/>
    <property type="match status" value="1"/>
</dbReference>
<protein>
    <recommendedName>
        <fullName evidence="1">Guanylate kinase</fullName>
        <ecNumber evidence="1">2.7.4.8</ecNumber>
    </recommendedName>
    <alternativeName>
        <fullName evidence="1">GMP kinase</fullName>
    </alternativeName>
</protein>
<evidence type="ECO:0000255" key="1">
    <source>
        <dbReference type="HAMAP-Rule" id="MF_00328"/>
    </source>
</evidence>